<keyword id="KW-0135">Cellulose biosynthesis</keyword>
<keyword id="KW-0547">Nucleotide-binding</keyword>
<organism>
    <name type="scientific">Salmonella typhimurium (strain 14028s / SGSC 2262)</name>
    <dbReference type="NCBI Taxonomy" id="588858"/>
    <lineage>
        <taxon>Bacteria</taxon>
        <taxon>Pseudomonadati</taxon>
        <taxon>Pseudomonadota</taxon>
        <taxon>Gammaproteobacteria</taxon>
        <taxon>Enterobacterales</taxon>
        <taxon>Enterobacteriaceae</taxon>
        <taxon>Salmonella</taxon>
    </lineage>
</organism>
<gene>
    <name type="primary">bcsE</name>
    <name type="ordered locus">STM14_4362</name>
</gene>
<accession>A0A0F6B8A2</accession>
<sequence length="523" mass="59307">MRDTVDPVFSLGISSLWDELRHMPTGGVWWVNADRQQDAISLVNQTIASQTENANVAVIGMEGDPGKVIKLDESHGPEKIRLFTMPDSEKGLYSLPHDLLCSVNPTHYFFILICANNTWRNITSESLHKWLEKMNKWTRFHHCSLLVINPCNNSDKQSSLLMGEYRSLFGLASLRFQGDQHLFDIAFWCNEKGVSARQQLLLCQQDERWTLSHQEETAIQPRSDEKRILSHVAVLEGAPPLSEHWTLFDNNEALFNDARTAQAATIIFSLTQNNQIEPLARRIHTLRRQRGSALKIVVRENIASLRATDERLLLGCGANMIIPWNAPLSRCLTLIESVQGQQFSRYVPEDITTLLSMTQPLKLRGFQPWDTFCDAIHTMMSNTLLPADGKGVLVALRPVPGIRVEQALTLCRPNRTGDIMTIGGNRLVLFLSFCRVNDLDTALNHIFPLPTGDIFSNRMVWFEDKQISAELVQMRLLSPELWGTPLPLAKRADPVINAEHDGRIWRRIPEPLRLLDDTAERAS</sequence>
<comment type="function">
    <text evidence="1 2">Binds bis-(3'-5') cyclic diguanylic acid (c-di-GMP) (By similarity). Required for maximal cellulose synthesis, does not act as a protease on BcsA (PubMed:24942809).</text>
</comment>
<comment type="disruption phenotype">
    <text evidence="2">Produces much less cellulose, and the timing cellulose synthesis and structure of the fibers may be altered. Deletion can be complemented by the protein from S.typhimurium LT2 or E.coli, however the 'D-415' mutation in the E.coli protein does not complement (PubMed:24942809).</text>
</comment>
<comment type="similarity">
    <text evidence="4">Belongs to the BcsE family.</text>
</comment>
<proteinExistence type="inferred from homology"/>
<evidence type="ECO:0000250" key="1">
    <source>
        <dbReference type="UniProtKB" id="P37657"/>
    </source>
</evidence>
<evidence type="ECO:0000269" key="2">
    <source>
    </source>
</evidence>
<evidence type="ECO:0000303" key="3">
    <source>
    </source>
</evidence>
<evidence type="ECO:0000305" key="4"/>
<feature type="chain" id="PRO_0000441759" description="Cyclic di-GMP binding protein BcsE">
    <location>
        <begin position="1"/>
        <end position="523"/>
    </location>
</feature>
<reference key="1">
    <citation type="journal article" date="2010" name="J. Bacteriol.">
        <title>Short-term signatures of evolutionary change in the Salmonella enterica serovar typhimurium 14028 genome.</title>
        <authorList>
            <person name="Jarvik T."/>
            <person name="Smillie C."/>
            <person name="Groisman E.A."/>
            <person name="Ochman H."/>
        </authorList>
    </citation>
    <scope>NUCLEOTIDE SEQUENCE [LARGE SCALE GENOMIC DNA]</scope>
    <source>
        <strain>14028s / SGSC 2262</strain>
    </source>
</reference>
<reference key="2">
    <citation type="journal article" date="2014" name="Mol. Microbiol.">
        <title>GIL, a new c-di-GMP-binding protein domain involved in regulation of cellulose synthesis in enterobacteria.</title>
        <authorList>
            <person name="Fang X."/>
            <person name="Ahmad I."/>
            <person name="Blanka A."/>
            <person name="Schottkowski M."/>
            <person name="Cimdins A."/>
            <person name="Galperin M.Y."/>
            <person name="Roemling U."/>
            <person name="Gomelsky M."/>
        </authorList>
    </citation>
    <scope>FUNCTION</scope>
    <scope>DISRUPTION PHENOTYPE</scope>
    <source>
        <strain>14028 / UMR1</strain>
    </source>
</reference>
<protein>
    <recommendedName>
        <fullName evidence="3">Cyclic di-GMP binding protein BcsE</fullName>
    </recommendedName>
    <alternativeName>
        <fullName>Cellulose biosynthesis protein BcsE</fullName>
    </alternativeName>
</protein>
<dbReference type="EMBL" id="CP001363">
    <property type="protein sequence ID" value="ACY90750.1"/>
    <property type="molecule type" value="Genomic_DNA"/>
</dbReference>
<dbReference type="RefSeq" id="WP_001205771.1">
    <property type="nucleotide sequence ID" value="NZ_CP043402.1"/>
</dbReference>
<dbReference type="SMR" id="A0A0F6B8A2"/>
<dbReference type="KEGG" id="seo:STM14_4362"/>
<dbReference type="PATRIC" id="fig|588858.6.peg.3982"/>
<dbReference type="HOGENOM" id="CLU_039389_2_0_6"/>
<dbReference type="BioCyc" id="SENT588858:STM14_RS19165-MONOMER"/>
<dbReference type="Proteomes" id="UP000002695">
    <property type="component" value="Chromosome"/>
</dbReference>
<dbReference type="GO" id="GO:0035438">
    <property type="term" value="F:cyclic-di-GMP binding"/>
    <property type="evidence" value="ECO:0007669"/>
    <property type="project" value="InterPro"/>
</dbReference>
<dbReference type="GO" id="GO:0030244">
    <property type="term" value="P:cellulose biosynthetic process"/>
    <property type="evidence" value="ECO:0007669"/>
    <property type="project" value="UniProtKB-KW"/>
</dbReference>
<dbReference type="InterPro" id="IPR017745">
    <property type="entry name" value="BcsE"/>
</dbReference>
<dbReference type="NCBIfam" id="TIGR03369">
    <property type="entry name" value="cellulose_bcsE"/>
    <property type="match status" value="1"/>
</dbReference>
<dbReference type="NCBIfam" id="NF011619">
    <property type="entry name" value="PRK15045.1"/>
    <property type="match status" value="1"/>
</dbReference>
<dbReference type="Pfam" id="PF10995">
    <property type="entry name" value="CBP_BcsE"/>
    <property type="match status" value="1"/>
</dbReference>
<name>BCSE_SALT1</name>